<evidence type="ECO:0000250" key="1"/>
<evidence type="ECO:0000250" key="2">
    <source>
        <dbReference type="UniProtKB" id="Q08AH1"/>
    </source>
</evidence>
<evidence type="ECO:0000250" key="3">
    <source>
        <dbReference type="UniProtKB" id="Q7TN78"/>
    </source>
</evidence>
<evidence type="ECO:0000255" key="4"/>
<evidence type="ECO:0000305" key="5"/>
<protein>
    <recommendedName>
        <fullName>Acyl-coenzyme A synthetase ACSM4, mitochondrial</fullName>
        <ecNumber evidence="3">6.2.1.2</ecNumber>
    </recommendedName>
    <alternativeName>
        <fullName>Acyl-CoA synthetase medium-chain family member 4</fullName>
    </alternativeName>
</protein>
<dbReference type="EC" id="6.2.1.2" evidence="3"/>
<dbReference type="EMBL" id="AC131205">
    <property type="status" value="NOT_ANNOTATED_CDS"/>
    <property type="molecule type" value="Genomic_DNA"/>
</dbReference>
<dbReference type="EMBL" id="DY654856">
    <property type="status" value="NOT_ANNOTATED_CDS"/>
    <property type="molecule type" value="mRNA"/>
</dbReference>
<dbReference type="CCDS" id="CCDS44825.1"/>
<dbReference type="RefSeq" id="NP_001073923.1">
    <property type="nucleotide sequence ID" value="NM_001080454.2"/>
</dbReference>
<dbReference type="SMR" id="P0C7M7"/>
<dbReference type="BioGRID" id="131135">
    <property type="interactions" value="2"/>
</dbReference>
<dbReference type="FunCoup" id="P0C7M7">
    <property type="interactions" value="27"/>
</dbReference>
<dbReference type="STRING" id="9606.ENSP00000382349"/>
<dbReference type="GlyGen" id="P0C7M7">
    <property type="glycosylation" value="1 site, 1 O-linked glycan (1 site)"/>
</dbReference>
<dbReference type="iPTMnet" id="P0C7M7"/>
<dbReference type="PhosphoSitePlus" id="P0C7M7"/>
<dbReference type="BioMuta" id="ACSM4"/>
<dbReference type="DMDM" id="190358135"/>
<dbReference type="jPOST" id="P0C7M7"/>
<dbReference type="MassIVE" id="P0C7M7"/>
<dbReference type="PaxDb" id="9606-ENSP00000382349"/>
<dbReference type="PeptideAtlas" id="P0C7M7"/>
<dbReference type="ProteomicsDB" id="52346"/>
<dbReference type="Antibodypedia" id="59210">
    <property type="antibodies" value="55 antibodies from 12 providers"/>
</dbReference>
<dbReference type="DNASU" id="341392"/>
<dbReference type="Ensembl" id="ENST00000399422.5">
    <property type="protein sequence ID" value="ENSP00000382349.4"/>
    <property type="gene ID" value="ENSG00000215009.6"/>
</dbReference>
<dbReference type="GeneID" id="341392"/>
<dbReference type="KEGG" id="hsa:341392"/>
<dbReference type="MANE-Select" id="ENST00000399422.5">
    <property type="protein sequence ID" value="ENSP00000382349.4"/>
    <property type="RefSeq nucleotide sequence ID" value="NM_001080454.2"/>
    <property type="RefSeq protein sequence ID" value="NP_001073923.1"/>
</dbReference>
<dbReference type="UCSC" id="uc001qsx.2">
    <property type="organism name" value="human"/>
</dbReference>
<dbReference type="AGR" id="HGNC:32016"/>
<dbReference type="CTD" id="341392"/>
<dbReference type="GeneCards" id="ACSM4"/>
<dbReference type="HGNC" id="HGNC:32016">
    <property type="gene designation" value="ACSM4"/>
</dbReference>
<dbReference type="HPA" id="ENSG00000215009">
    <property type="expression patterns" value="Not detected"/>
</dbReference>
<dbReference type="MIM" id="614360">
    <property type="type" value="gene"/>
</dbReference>
<dbReference type="neXtProt" id="NX_P0C7M7"/>
<dbReference type="OpenTargets" id="ENSG00000215009"/>
<dbReference type="PharmGKB" id="PA162375472"/>
<dbReference type="VEuPathDB" id="HostDB:ENSG00000215009"/>
<dbReference type="eggNOG" id="KOG1175">
    <property type="taxonomic scope" value="Eukaryota"/>
</dbReference>
<dbReference type="GeneTree" id="ENSGT00940000162316"/>
<dbReference type="HOGENOM" id="CLU_000022_59_10_1"/>
<dbReference type="InParanoid" id="P0C7M7"/>
<dbReference type="OMA" id="QLWTPLT"/>
<dbReference type="OrthoDB" id="6614653at2759"/>
<dbReference type="PAN-GO" id="P0C7M7">
    <property type="GO annotations" value="5 GO annotations based on evolutionary models"/>
</dbReference>
<dbReference type="PhylomeDB" id="P0C7M7"/>
<dbReference type="TreeFam" id="TF354287"/>
<dbReference type="PathwayCommons" id="P0C7M7"/>
<dbReference type="Reactome" id="R-HSA-177128">
    <property type="pathway name" value="Conjugation of salicylate with glycine"/>
</dbReference>
<dbReference type="Reactome" id="R-HSA-9749641">
    <property type="pathway name" value="Aspirin ADME"/>
</dbReference>
<dbReference type="BioGRID-ORCS" id="341392">
    <property type="hits" value="15 hits in 1147 CRISPR screens"/>
</dbReference>
<dbReference type="ChiTaRS" id="ACSM4">
    <property type="organism name" value="human"/>
</dbReference>
<dbReference type="GenomeRNAi" id="341392"/>
<dbReference type="Pharos" id="P0C7M7">
    <property type="development level" value="Tdark"/>
</dbReference>
<dbReference type="PRO" id="PR:P0C7M7"/>
<dbReference type="Proteomes" id="UP000005640">
    <property type="component" value="Chromosome 12"/>
</dbReference>
<dbReference type="RNAct" id="P0C7M7">
    <property type="molecule type" value="protein"/>
</dbReference>
<dbReference type="Bgee" id="ENSG00000215009">
    <property type="expression patterns" value="Expressed in male germ line stem cell (sensu Vertebrata) in testis and 58 other cell types or tissues"/>
</dbReference>
<dbReference type="GO" id="GO:0005759">
    <property type="term" value="C:mitochondrial matrix"/>
    <property type="evidence" value="ECO:0000318"/>
    <property type="project" value="GO_Central"/>
</dbReference>
<dbReference type="GO" id="GO:0005739">
    <property type="term" value="C:mitochondrion"/>
    <property type="evidence" value="ECO:0006056"/>
    <property type="project" value="FlyBase"/>
</dbReference>
<dbReference type="GO" id="GO:0005524">
    <property type="term" value="F:ATP binding"/>
    <property type="evidence" value="ECO:0007669"/>
    <property type="project" value="UniProtKB-KW"/>
</dbReference>
<dbReference type="GO" id="GO:0102391">
    <property type="term" value="F:decanoate-CoA ligase activity"/>
    <property type="evidence" value="ECO:0000250"/>
    <property type="project" value="UniProtKB"/>
</dbReference>
<dbReference type="GO" id="GO:0015645">
    <property type="term" value="F:fatty acid ligase activity"/>
    <property type="evidence" value="ECO:0000250"/>
    <property type="project" value="UniProtKB"/>
</dbReference>
<dbReference type="GO" id="GO:0004321">
    <property type="term" value="F:fatty-acyl-CoA synthase activity"/>
    <property type="evidence" value="ECO:0000318"/>
    <property type="project" value="GO_Central"/>
</dbReference>
<dbReference type="GO" id="GO:0046872">
    <property type="term" value="F:metal ion binding"/>
    <property type="evidence" value="ECO:0007669"/>
    <property type="project" value="UniProtKB-KW"/>
</dbReference>
<dbReference type="GO" id="GO:0006637">
    <property type="term" value="P:acyl-CoA metabolic process"/>
    <property type="evidence" value="ECO:0000318"/>
    <property type="project" value="GO_Central"/>
</dbReference>
<dbReference type="GO" id="GO:0006633">
    <property type="term" value="P:fatty acid biosynthetic process"/>
    <property type="evidence" value="ECO:0000318"/>
    <property type="project" value="GO_Central"/>
</dbReference>
<dbReference type="CDD" id="cd05928">
    <property type="entry name" value="MACS_euk"/>
    <property type="match status" value="1"/>
</dbReference>
<dbReference type="FunFam" id="3.40.50.12780:FF:000007">
    <property type="entry name" value="Acyl-coenzyme A synthetase ACSM2A, mitochondrial"/>
    <property type="match status" value="1"/>
</dbReference>
<dbReference type="FunFam" id="3.30.300.30:FF:000005">
    <property type="entry name" value="Acyl-coenzyme A synthetase ACSM5, mitochondrial"/>
    <property type="match status" value="1"/>
</dbReference>
<dbReference type="Gene3D" id="3.30.300.30">
    <property type="match status" value="1"/>
</dbReference>
<dbReference type="Gene3D" id="3.40.50.12780">
    <property type="entry name" value="N-terminal domain of ligase-like"/>
    <property type="match status" value="1"/>
</dbReference>
<dbReference type="InterPro" id="IPR025110">
    <property type="entry name" value="AMP-bd_C"/>
</dbReference>
<dbReference type="InterPro" id="IPR045851">
    <property type="entry name" value="AMP-bd_C_sf"/>
</dbReference>
<dbReference type="InterPro" id="IPR020845">
    <property type="entry name" value="AMP-binding_CS"/>
</dbReference>
<dbReference type="InterPro" id="IPR000873">
    <property type="entry name" value="AMP-dep_synth/lig_dom"/>
</dbReference>
<dbReference type="InterPro" id="IPR042099">
    <property type="entry name" value="ANL_N_sf"/>
</dbReference>
<dbReference type="InterPro" id="IPR051087">
    <property type="entry name" value="Mitochondrial_ACSM"/>
</dbReference>
<dbReference type="PANTHER" id="PTHR43605">
    <property type="entry name" value="ACYL-COENZYME A SYNTHETASE"/>
    <property type="match status" value="1"/>
</dbReference>
<dbReference type="PANTHER" id="PTHR43605:SF8">
    <property type="entry name" value="ACYL-COENZYME A SYNTHETASE ACSM4, MITOCHONDRIAL"/>
    <property type="match status" value="1"/>
</dbReference>
<dbReference type="Pfam" id="PF00501">
    <property type="entry name" value="AMP-binding"/>
    <property type="match status" value="1"/>
</dbReference>
<dbReference type="Pfam" id="PF13193">
    <property type="entry name" value="AMP-binding_C"/>
    <property type="match status" value="1"/>
</dbReference>
<dbReference type="SUPFAM" id="SSF56801">
    <property type="entry name" value="Acetyl-CoA synthetase-like"/>
    <property type="match status" value="1"/>
</dbReference>
<dbReference type="PROSITE" id="PS00455">
    <property type="entry name" value="AMP_BINDING"/>
    <property type="match status" value="1"/>
</dbReference>
<sequence length="580" mass="65703">MKIFFRYQTFRFIWLTKPPGRRLHKDHQLWTPLTLADFEAINRCNRPLPKNFNFAADVLDQWSQKEKTGERPANPALWWVNGKGDEVKWSFRELGSLSRKAANVLTKPCGLQRGDRLAVILPRIPEWWLVNVACIRTGIIFMPGTIQLTAKDILYRLRASKAKCIVASEEVAPAVESIVLECPDLKTKLLVSPQSWNGWLSFQELFQFASEEHSCVETGSQEPMTIYFTSGTTGFPKMAQHSQSSLGIGFTLCGRYWLDLKSSDIIWNMSDTGWVKAAIGSVFSSWLCGACVFVHRMAQFDTDTFLDTLTTYPITTLCSPPTVYRMLVQKDLKRYKFKSLRHCLTGGEPLNPEVLEQWRVQTGLELYEGYGQTEVGMICANQKGQEIKPGSMGKGMLPYDVQIIDENGNVLPPGKEGEIALRLKPTRPFCFFSKYVDNPQKTAATIRGDFYVTGDRGVMDSDGYFWFVGRADDVIISSGYRIGPFEVESALIEHPAVVESAVVSSPDQIRGEVVKAFVVLAAPFKSYNPEKLTLELQDHVKKSTAPYKYPRKVEFVQELPKTITGKIKRNVLRDQEWRGR</sequence>
<organism>
    <name type="scientific">Homo sapiens</name>
    <name type="common">Human</name>
    <dbReference type="NCBI Taxonomy" id="9606"/>
    <lineage>
        <taxon>Eukaryota</taxon>
        <taxon>Metazoa</taxon>
        <taxon>Chordata</taxon>
        <taxon>Craniata</taxon>
        <taxon>Vertebrata</taxon>
        <taxon>Euteleostomi</taxon>
        <taxon>Mammalia</taxon>
        <taxon>Eutheria</taxon>
        <taxon>Euarchontoglires</taxon>
        <taxon>Primates</taxon>
        <taxon>Haplorrhini</taxon>
        <taxon>Catarrhini</taxon>
        <taxon>Hominidae</taxon>
        <taxon>Homo</taxon>
    </lineage>
</organism>
<gene>
    <name type="primary">ACSM4</name>
</gene>
<keyword id="KW-0067">ATP-binding</keyword>
<keyword id="KW-0276">Fatty acid metabolism</keyword>
<keyword id="KW-0436">Ligase</keyword>
<keyword id="KW-0443">Lipid metabolism</keyword>
<keyword id="KW-0460">Magnesium</keyword>
<keyword id="KW-0479">Metal-binding</keyword>
<keyword id="KW-0496">Mitochondrion</keyword>
<keyword id="KW-0547">Nucleotide-binding</keyword>
<keyword id="KW-1267">Proteomics identification</keyword>
<keyword id="KW-1185">Reference proteome</keyword>
<keyword id="KW-0809">Transit peptide</keyword>
<accession>P0C7M7</accession>
<accession>A8MTI6</accession>
<reference key="1">
    <citation type="journal article" date="2006" name="Nature">
        <title>The finished DNA sequence of human chromosome 12.</title>
        <authorList>
            <person name="Scherer S.E."/>
            <person name="Muzny D.M."/>
            <person name="Buhay C.J."/>
            <person name="Chen R."/>
            <person name="Cree A."/>
            <person name="Ding Y."/>
            <person name="Dugan-Rocha S."/>
            <person name="Gill R."/>
            <person name="Gunaratne P."/>
            <person name="Harris R.A."/>
            <person name="Hawes A.C."/>
            <person name="Hernandez J."/>
            <person name="Hodgson A.V."/>
            <person name="Hume J."/>
            <person name="Jackson A."/>
            <person name="Khan Z.M."/>
            <person name="Kovar-Smith C."/>
            <person name="Lewis L.R."/>
            <person name="Lozado R.J."/>
            <person name="Metzker M.L."/>
            <person name="Milosavljevic A."/>
            <person name="Miner G.R."/>
            <person name="Montgomery K.T."/>
            <person name="Morgan M.B."/>
            <person name="Nazareth L.V."/>
            <person name="Scott G."/>
            <person name="Sodergren E."/>
            <person name="Song X.-Z."/>
            <person name="Steffen D."/>
            <person name="Lovering R.C."/>
            <person name="Wheeler D.A."/>
            <person name="Worley K.C."/>
            <person name="Yuan Y."/>
            <person name="Zhang Z."/>
            <person name="Adams C.Q."/>
            <person name="Ansari-Lari M.A."/>
            <person name="Ayele M."/>
            <person name="Brown M.J."/>
            <person name="Chen G."/>
            <person name="Chen Z."/>
            <person name="Clerc-Blankenburg K.P."/>
            <person name="Davis C."/>
            <person name="Delgado O."/>
            <person name="Dinh H.H."/>
            <person name="Draper H."/>
            <person name="Gonzalez-Garay M.L."/>
            <person name="Havlak P."/>
            <person name="Jackson L.R."/>
            <person name="Jacob L.S."/>
            <person name="Kelly S.H."/>
            <person name="Li L."/>
            <person name="Li Z."/>
            <person name="Liu J."/>
            <person name="Liu W."/>
            <person name="Lu J."/>
            <person name="Maheshwari M."/>
            <person name="Nguyen B.-V."/>
            <person name="Okwuonu G.O."/>
            <person name="Pasternak S."/>
            <person name="Perez L.M."/>
            <person name="Plopper F.J.H."/>
            <person name="Santibanez J."/>
            <person name="Shen H."/>
            <person name="Tabor P.E."/>
            <person name="Verduzco D."/>
            <person name="Waldron L."/>
            <person name="Wang Q."/>
            <person name="Williams G.A."/>
            <person name="Zhang J."/>
            <person name="Zhou J."/>
            <person name="Allen C.C."/>
            <person name="Amin A.G."/>
            <person name="Anyalebechi V."/>
            <person name="Bailey M."/>
            <person name="Barbaria J.A."/>
            <person name="Bimage K.E."/>
            <person name="Bryant N.P."/>
            <person name="Burch P.E."/>
            <person name="Burkett C.E."/>
            <person name="Burrell K.L."/>
            <person name="Calderon E."/>
            <person name="Cardenas V."/>
            <person name="Carter K."/>
            <person name="Casias K."/>
            <person name="Cavazos I."/>
            <person name="Cavazos S.R."/>
            <person name="Ceasar H."/>
            <person name="Chacko J."/>
            <person name="Chan S.N."/>
            <person name="Chavez D."/>
            <person name="Christopoulos C."/>
            <person name="Chu J."/>
            <person name="Cockrell R."/>
            <person name="Cox C.D."/>
            <person name="Dang M."/>
            <person name="Dathorne S.R."/>
            <person name="David R."/>
            <person name="Davis C.M."/>
            <person name="Davy-Carroll L."/>
            <person name="Deshazo D.R."/>
            <person name="Donlin J.E."/>
            <person name="D'Souza L."/>
            <person name="Eaves K.A."/>
            <person name="Egan A."/>
            <person name="Emery-Cohen A.J."/>
            <person name="Escotto M."/>
            <person name="Flagg N."/>
            <person name="Forbes L.D."/>
            <person name="Gabisi A.M."/>
            <person name="Garza M."/>
            <person name="Hamilton C."/>
            <person name="Henderson N."/>
            <person name="Hernandez O."/>
            <person name="Hines S."/>
            <person name="Hogues M.E."/>
            <person name="Huang M."/>
            <person name="Idlebird D.G."/>
            <person name="Johnson R."/>
            <person name="Jolivet A."/>
            <person name="Jones S."/>
            <person name="Kagan R."/>
            <person name="King L.M."/>
            <person name="Leal B."/>
            <person name="Lebow H."/>
            <person name="Lee S."/>
            <person name="LeVan J.M."/>
            <person name="Lewis L.C."/>
            <person name="London P."/>
            <person name="Lorensuhewa L.M."/>
            <person name="Loulseged H."/>
            <person name="Lovett D.A."/>
            <person name="Lucier A."/>
            <person name="Lucier R.L."/>
            <person name="Ma J."/>
            <person name="Madu R.C."/>
            <person name="Mapua P."/>
            <person name="Martindale A.D."/>
            <person name="Martinez E."/>
            <person name="Massey E."/>
            <person name="Mawhiney S."/>
            <person name="Meador M.G."/>
            <person name="Mendez S."/>
            <person name="Mercado C."/>
            <person name="Mercado I.C."/>
            <person name="Merritt C.E."/>
            <person name="Miner Z.L."/>
            <person name="Minja E."/>
            <person name="Mitchell T."/>
            <person name="Mohabbat F."/>
            <person name="Mohabbat K."/>
            <person name="Montgomery B."/>
            <person name="Moore N."/>
            <person name="Morris S."/>
            <person name="Munidasa M."/>
            <person name="Ngo R.N."/>
            <person name="Nguyen N.B."/>
            <person name="Nickerson E."/>
            <person name="Nwaokelemeh O.O."/>
            <person name="Nwokenkwo S."/>
            <person name="Obregon M."/>
            <person name="Oguh M."/>
            <person name="Oragunye N."/>
            <person name="Oviedo R.J."/>
            <person name="Parish B.J."/>
            <person name="Parker D.N."/>
            <person name="Parrish J."/>
            <person name="Parks K.L."/>
            <person name="Paul H.A."/>
            <person name="Payton B.A."/>
            <person name="Perez A."/>
            <person name="Perrin W."/>
            <person name="Pickens A."/>
            <person name="Primus E.L."/>
            <person name="Pu L.-L."/>
            <person name="Puazo M."/>
            <person name="Quiles M.M."/>
            <person name="Quiroz J.B."/>
            <person name="Rabata D."/>
            <person name="Reeves K."/>
            <person name="Ruiz S.J."/>
            <person name="Shao H."/>
            <person name="Sisson I."/>
            <person name="Sonaike T."/>
            <person name="Sorelle R.P."/>
            <person name="Sutton A.E."/>
            <person name="Svatek A.F."/>
            <person name="Svetz L.A."/>
            <person name="Tamerisa K.S."/>
            <person name="Taylor T.R."/>
            <person name="Teague B."/>
            <person name="Thomas N."/>
            <person name="Thorn R.D."/>
            <person name="Trejos Z.Y."/>
            <person name="Trevino B.K."/>
            <person name="Ukegbu O.N."/>
            <person name="Urban J.B."/>
            <person name="Vasquez L.I."/>
            <person name="Vera V.A."/>
            <person name="Villasana D.M."/>
            <person name="Wang L."/>
            <person name="Ward-Moore S."/>
            <person name="Warren J.T."/>
            <person name="Wei X."/>
            <person name="White F."/>
            <person name="Williamson A.L."/>
            <person name="Wleczyk R."/>
            <person name="Wooden H.S."/>
            <person name="Wooden S.H."/>
            <person name="Yen J."/>
            <person name="Yoon L."/>
            <person name="Yoon V."/>
            <person name="Zorrilla S.E."/>
            <person name="Nelson D."/>
            <person name="Kucherlapati R."/>
            <person name="Weinstock G."/>
            <person name="Gibbs R.A."/>
        </authorList>
    </citation>
    <scope>NUCLEOTIDE SEQUENCE [LARGE SCALE GENOMIC DNA]</scope>
</reference>
<reference key="2">
    <citation type="submission" date="2006-03" db="EMBL/GenBank/DDBJ databases">
        <title>Exhaustive RT-PCR and sequencing of all novel TWINSCAN predictions in human.</title>
        <authorList>
            <person name="Stevens M."/>
            <person name="Wei C."/>
            <person name="Gross S.S."/>
            <person name="McPherson J."/>
            <person name="Brent M.R."/>
        </authorList>
    </citation>
    <scope>NUCLEOTIDE SEQUENCE [LARGE SCALE MRNA] OF 330-474</scope>
</reference>
<reference key="3">
    <citation type="journal article" date="2007" name="J. Lipid Res.">
        <title>Evidence for 26 distinct acyl-coenzyme A synthetase genes in the human genome.</title>
        <authorList>
            <person name="Watkins P.A."/>
            <person name="Maiguel D."/>
            <person name="Jia Z."/>
            <person name="Pevsner J."/>
        </authorList>
    </citation>
    <scope>IDENTIFICATION</scope>
</reference>
<reference key="4">
    <citation type="journal article" date="2016" name="Expert Opin. Drug Metab. Toxicol.">
        <title>Xenobiotic/medium chain fatty acid: CoA ligase - a critical review on its role in fatty acid metabolism and the detoxification of benzoic acid and aspirin.</title>
        <authorList>
            <person name="van der Sluis R."/>
            <person name="Erasmus E."/>
        </authorList>
    </citation>
    <scope>REVIEW</scope>
</reference>
<name>ACSM4_HUMAN</name>
<proteinExistence type="evidence at protein level"/>
<feature type="transit peptide" description="Mitochondrion" evidence="4">
    <location>
        <begin position="1"/>
        <end position="22"/>
    </location>
</feature>
<feature type="chain" id="PRO_0000339384" description="Acyl-coenzyme A synthetase ACSM4, mitochondrial">
    <location>
        <begin position="23"/>
        <end position="580"/>
    </location>
</feature>
<feature type="binding site" evidence="1">
    <location>
        <begin position="229"/>
        <end position="237"/>
    </location>
    <ligand>
        <name>ATP</name>
        <dbReference type="ChEBI" id="CHEBI:30616"/>
    </ligand>
</feature>
<feature type="binding site" evidence="1">
    <location>
        <begin position="368"/>
        <end position="373"/>
    </location>
    <ligand>
        <name>ATP</name>
        <dbReference type="ChEBI" id="CHEBI:30616"/>
    </ligand>
</feature>
<feature type="binding site" evidence="1">
    <location>
        <position position="455"/>
    </location>
    <ligand>
        <name>ATP</name>
        <dbReference type="ChEBI" id="CHEBI:30616"/>
    </ligand>
</feature>
<feature type="binding site" evidence="1">
    <location>
        <position position="470"/>
    </location>
    <ligand>
        <name>ATP</name>
        <dbReference type="ChEBI" id="CHEBI:30616"/>
    </ligand>
</feature>
<feature type="binding site" evidence="1">
    <location>
        <position position="566"/>
    </location>
    <ligand>
        <name>ATP</name>
        <dbReference type="ChEBI" id="CHEBI:30616"/>
    </ligand>
</feature>
<feature type="sequence variant" id="VAR_061010" description="In dbSNP:rs61584783.">
    <original>R</original>
    <variation>H</variation>
    <location>
        <position position="481"/>
    </location>
</feature>
<comment type="function">
    <text evidence="3">Catalyzes the activation of fatty acids by CoA to produce an acyl-CoA, the first step in fatty acid metabolism (By similarity). Capable of activating medium-chain fatty acids with a preference for C6-12 fatty acids (By similarity).</text>
</comment>
<comment type="catalytic activity">
    <reaction evidence="3">
        <text>a medium-chain fatty acid + ATP + CoA = a medium-chain fatty acyl-CoA + AMP + diphosphate</text>
        <dbReference type="Rhea" id="RHEA:48340"/>
        <dbReference type="ChEBI" id="CHEBI:30616"/>
        <dbReference type="ChEBI" id="CHEBI:33019"/>
        <dbReference type="ChEBI" id="CHEBI:57287"/>
        <dbReference type="ChEBI" id="CHEBI:59558"/>
        <dbReference type="ChEBI" id="CHEBI:90546"/>
        <dbReference type="ChEBI" id="CHEBI:456215"/>
        <dbReference type="EC" id="6.2.1.2"/>
    </reaction>
    <physiologicalReaction direction="left-to-right" evidence="3">
        <dbReference type="Rhea" id="RHEA:48341"/>
    </physiologicalReaction>
</comment>
<comment type="catalytic activity">
    <reaction evidence="3">
        <text>hexanoate + ATP + CoA = hexanoyl-CoA + AMP + diphosphate</text>
        <dbReference type="Rhea" id="RHEA:43740"/>
        <dbReference type="ChEBI" id="CHEBI:17120"/>
        <dbReference type="ChEBI" id="CHEBI:30616"/>
        <dbReference type="ChEBI" id="CHEBI:33019"/>
        <dbReference type="ChEBI" id="CHEBI:57287"/>
        <dbReference type="ChEBI" id="CHEBI:62620"/>
        <dbReference type="ChEBI" id="CHEBI:456215"/>
    </reaction>
    <physiologicalReaction direction="left-to-right" evidence="3">
        <dbReference type="Rhea" id="RHEA:43741"/>
    </physiologicalReaction>
</comment>
<comment type="catalytic activity">
    <reaction evidence="3">
        <text>octanoate + ATP + CoA = octanoyl-CoA + AMP + diphosphate</text>
        <dbReference type="Rhea" id="RHEA:33631"/>
        <dbReference type="ChEBI" id="CHEBI:25646"/>
        <dbReference type="ChEBI" id="CHEBI:30616"/>
        <dbReference type="ChEBI" id="CHEBI:33019"/>
        <dbReference type="ChEBI" id="CHEBI:57287"/>
        <dbReference type="ChEBI" id="CHEBI:57386"/>
        <dbReference type="ChEBI" id="CHEBI:456215"/>
    </reaction>
    <physiologicalReaction direction="left-to-right" evidence="3">
        <dbReference type="Rhea" id="RHEA:33632"/>
    </physiologicalReaction>
</comment>
<comment type="catalytic activity">
    <reaction evidence="3">
        <text>decanoate + ATP + CoA = decanoyl-CoA + AMP + diphosphate</text>
        <dbReference type="Rhea" id="RHEA:33627"/>
        <dbReference type="ChEBI" id="CHEBI:27689"/>
        <dbReference type="ChEBI" id="CHEBI:30616"/>
        <dbReference type="ChEBI" id="CHEBI:33019"/>
        <dbReference type="ChEBI" id="CHEBI:57287"/>
        <dbReference type="ChEBI" id="CHEBI:61430"/>
        <dbReference type="ChEBI" id="CHEBI:456215"/>
    </reaction>
    <physiologicalReaction direction="left-to-right" evidence="3">
        <dbReference type="Rhea" id="RHEA:33628"/>
    </physiologicalReaction>
</comment>
<comment type="catalytic activity">
    <reaction evidence="3">
        <text>dodecanoate + ATP + CoA = dodecanoyl-CoA + AMP + diphosphate</text>
        <dbReference type="Rhea" id="RHEA:33623"/>
        <dbReference type="ChEBI" id="CHEBI:18262"/>
        <dbReference type="ChEBI" id="CHEBI:30616"/>
        <dbReference type="ChEBI" id="CHEBI:33019"/>
        <dbReference type="ChEBI" id="CHEBI:57287"/>
        <dbReference type="ChEBI" id="CHEBI:57375"/>
        <dbReference type="ChEBI" id="CHEBI:456215"/>
    </reaction>
    <physiologicalReaction direction="left-to-right" evidence="3">
        <dbReference type="Rhea" id="RHEA:33624"/>
    </physiologicalReaction>
</comment>
<comment type="cofactor">
    <cofactor evidence="2">
        <name>Mg(2+)</name>
        <dbReference type="ChEBI" id="CHEBI:18420"/>
    </cofactor>
    <cofactor evidence="2">
        <name>Mn(2+)</name>
        <dbReference type="ChEBI" id="CHEBI:29035"/>
    </cofactor>
</comment>
<comment type="subcellular location">
    <subcellularLocation>
        <location evidence="3">Mitochondrion</location>
    </subcellularLocation>
</comment>
<comment type="similarity">
    <text evidence="5">Belongs to the ATP-dependent AMP-binding enzyme family.</text>
</comment>